<dbReference type="EC" id="2.1.1.170" evidence="1"/>
<dbReference type="EMBL" id="CP000301">
    <property type="protein sequence ID" value="ABD85864.1"/>
    <property type="molecule type" value="Genomic_DNA"/>
</dbReference>
<dbReference type="SMR" id="Q21CM2"/>
<dbReference type="STRING" id="316056.RPC_0289"/>
<dbReference type="KEGG" id="rpc:RPC_0289"/>
<dbReference type="eggNOG" id="COG0357">
    <property type="taxonomic scope" value="Bacteria"/>
</dbReference>
<dbReference type="HOGENOM" id="CLU_065341_1_0_5"/>
<dbReference type="OrthoDB" id="9808773at2"/>
<dbReference type="GO" id="GO:0005829">
    <property type="term" value="C:cytosol"/>
    <property type="evidence" value="ECO:0007669"/>
    <property type="project" value="TreeGrafter"/>
</dbReference>
<dbReference type="GO" id="GO:0070043">
    <property type="term" value="F:rRNA (guanine-N7-)-methyltransferase activity"/>
    <property type="evidence" value="ECO:0007669"/>
    <property type="project" value="UniProtKB-UniRule"/>
</dbReference>
<dbReference type="Gene3D" id="3.40.50.150">
    <property type="entry name" value="Vaccinia Virus protein VP39"/>
    <property type="match status" value="1"/>
</dbReference>
<dbReference type="HAMAP" id="MF_00074">
    <property type="entry name" value="16SrRNA_methyltr_G"/>
    <property type="match status" value="1"/>
</dbReference>
<dbReference type="InterPro" id="IPR003682">
    <property type="entry name" value="rRNA_ssu_MeTfrase_G"/>
</dbReference>
<dbReference type="InterPro" id="IPR029063">
    <property type="entry name" value="SAM-dependent_MTases_sf"/>
</dbReference>
<dbReference type="NCBIfam" id="TIGR00138">
    <property type="entry name" value="rsmG_gidB"/>
    <property type="match status" value="1"/>
</dbReference>
<dbReference type="PANTHER" id="PTHR31760">
    <property type="entry name" value="S-ADENOSYL-L-METHIONINE-DEPENDENT METHYLTRANSFERASES SUPERFAMILY PROTEIN"/>
    <property type="match status" value="1"/>
</dbReference>
<dbReference type="PANTHER" id="PTHR31760:SF0">
    <property type="entry name" value="S-ADENOSYL-L-METHIONINE-DEPENDENT METHYLTRANSFERASES SUPERFAMILY PROTEIN"/>
    <property type="match status" value="1"/>
</dbReference>
<dbReference type="Pfam" id="PF02527">
    <property type="entry name" value="GidB"/>
    <property type="match status" value="1"/>
</dbReference>
<dbReference type="PIRSF" id="PIRSF003078">
    <property type="entry name" value="GidB"/>
    <property type="match status" value="1"/>
</dbReference>
<dbReference type="SUPFAM" id="SSF53335">
    <property type="entry name" value="S-adenosyl-L-methionine-dependent methyltransferases"/>
    <property type="match status" value="1"/>
</dbReference>
<organism>
    <name type="scientific">Rhodopseudomonas palustris (strain BisB18)</name>
    <dbReference type="NCBI Taxonomy" id="316056"/>
    <lineage>
        <taxon>Bacteria</taxon>
        <taxon>Pseudomonadati</taxon>
        <taxon>Pseudomonadota</taxon>
        <taxon>Alphaproteobacteria</taxon>
        <taxon>Hyphomicrobiales</taxon>
        <taxon>Nitrobacteraceae</taxon>
        <taxon>Rhodopseudomonas</taxon>
    </lineage>
</organism>
<sequence>MAQRSQKSPPPPELAADKAAALRLTPVSRETEARLDAYVALLLQWQAKTNLISPATLPQLWTRHVADSLQLLRLAPDAKTWLDFGSGGGFPGVVLACALAESAGGSVQLVERNVKKAAFLREALRVTGGAGQVILADIGDSVDRFAGQVDCVTARAVAPLHQLIGFAKPLIRQGAKALFLKGQDVDAELTEATKSWKFSPRLHPSLTGGQGWIVELGAVEPQDQSAPTPHGASV</sequence>
<feature type="chain" id="PRO_1000010194" description="Ribosomal RNA small subunit methyltransferase G">
    <location>
        <begin position="1"/>
        <end position="234"/>
    </location>
</feature>
<feature type="binding site" evidence="1">
    <location>
        <position position="85"/>
    </location>
    <ligand>
        <name>S-adenosyl-L-methionine</name>
        <dbReference type="ChEBI" id="CHEBI:59789"/>
    </ligand>
</feature>
<feature type="binding site" evidence="1">
    <location>
        <position position="90"/>
    </location>
    <ligand>
        <name>S-adenosyl-L-methionine</name>
        <dbReference type="ChEBI" id="CHEBI:59789"/>
    </ligand>
</feature>
<feature type="binding site" evidence="1">
    <location>
        <position position="155"/>
    </location>
    <ligand>
        <name>S-adenosyl-L-methionine</name>
        <dbReference type="ChEBI" id="CHEBI:59789"/>
    </ligand>
</feature>
<comment type="function">
    <text evidence="1">Specifically methylates the N7 position of guanine in position 527 of 16S rRNA.</text>
</comment>
<comment type="catalytic activity">
    <reaction evidence="1">
        <text>guanosine(527) in 16S rRNA + S-adenosyl-L-methionine = N(7)-methylguanosine(527) in 16S rRNA + S-adenosyl-L-homocysteine</text>
        <dbReference type="Rhea" id="RHEA:42732"/>
        <dbReference type="Rhea" id="RHEA-COMP:10209"/>
        <dbReference type="Rhea" id="RHEA-COMP:10210"/>
        <dbReference type="ChEBI" id="CHEBI:57856"/>
        <dbReference type="ChEBI" id="CHEBI:59789"/>
        <dbReference type="ChEBI" id="CHEBI:74269"/>
        <dbReference type="ChEBI" id="CHEBI:74480"/>
        <dbReference type="EC" id="2.1.1.170"/>
    </reaction>
</comment>
<comment type="subcellular location">
    <subcellularLocation>
        <location evidence="1">Cytoplasm</location>
    </subcellularLocation>
</comment>
<comment type="similarity">
    <text evidence="1">Belongs to the methyltransferase superfamily. RNA methyltransferase RsmG family.</text>
</comment>
<protein>
    <recommendedName>
        <fullName evidence="1">Ribosomal RNA small subunit methyltransferase G</fullName>
        <ecNumber evidence="1">2.1.1.170</ecNumber>
    </recommendedName>
    <alternativeName>
        <fullName evidence="1">16S rRNA 7-methylguanosine methyltransferase</fullName>
        <shortName evidence="1">16S rRNA m7G methyltransferase</shortName>
    </alternativeName>
</protein>
<gene>
    <name evidence="1" type="primary">rsmG</name>
    <name type="ordered locus">RPC_0289</name>
</gene>
<reference key="1">
    <citation type="submission" date="2006-03" db="EMBL/GenBank/DDBJ databases">
        <title>Complete sequence of Rhodopseudomonas palustris BisB18.</title>
        <authorList>
            <consortium name="US DOE Joint Genome Institute"/>
            <person name="Copeland A."/>
            <person name="Lucas S."/>
            <person name="Lapidus A."/>
            <person name="Barry K."/>
            <person name="Detter J.C."/>
            <person name="Glavina del Rio T."/>
            <person name="Hammon N."/>
            <person name="Israni S."/>
            <person name="Dalin E."/>
            <person name="Tice H."/>
            <person name="Pitluck S."/>
            <person name="Chain P."/>
            <person name="Malfatti S."/>
            <person name="Shin M."/>
            <person name="Vergez L."/>
            <person name="Schmutz J."/>
            <person name="Larimer F."/>
            <person name="Land M."/>
            <person name="Hauser L."/>
            <person name="Pelletier D.A."/>
            <person name="Kyrpides N."/>
            <person name="Anderson I."/>
            <person name="Oda Y."/>
            <person name="Harwood C.S."/>
            <person name="Richardson P."/>
        </authorList>
    </citation>
    <scope>NUCLEOTIDE SEQUENCE [LARGE SCALE GENOMIC DNA]</scope>
    <source>
        <strain>BisB18</strain>
    </source>
</reference>
<name>RSMG_RHOPB</name>
<evidence type="ECO:0000255" key="1">
    <source>
        <dbReference type="HAMAP-Rule" id="MF_00074"/>
    </source>
</evidence>
<keyword id="KW-0963">Cytoplasm</keyword>
<keyword id="KW-0489">Methyltransferase</keyword>
<keyword id="KW-0698">rRNA processing</keyword>
<keyword id="KW-0949">S-adenosyl-L-methionine</keyword>
<keyword id="KW-0808">Transferase</keyword>
<accession>Q21CM2</accession>
<proteinExistence type="inferred from homology"/>